<accession>P96086</accession>
<protein>
    <recommendedName>
        <fullName>Tricorn protease</fullName>
        <ecNumber evidence="4">3.4.21.-</ecNumber>
    </recommendedName>
</protein>
<sequence>MPSLMSFGSCQWIDQGRFSRSLYRNFKTFKLHEMHGLCMPNLLLNPDIHGDRIIFVCCDDLWEHDLKSGSTRKIVSNLGVINNARFFPDGRKIAIRVMRGSSLNTADLYFYNGENGEIKRITYFSGKSTGRRMFTDVAGFDPDGNLIISTDAMQPFSSMTCLYRVENDGINFVPLNLGPATHILFADGRRVIGRNTFELPHWKGYRGGTRGKIWIEVNSGAFKKIVDMSTHVSSPVIVGHRIYFITDIDGFGQIYSTDLDGKDLRKHTSFTDYYPRHLNTDGRRILFSKGGSIYIFNPDTEKIEKIEIGDLESPEDRIISIPSKFAEDFSPLDGDLIAFVSRGQAFIQDVSGTYVLKVPEPLRIRYVRRGGDTKVAFIHGTREGDFLGIYDYRTGKAEKFEENLGNVFAMGVDRNGKFAVVANDRFEIMTVDLETGKPTVIERSREAMITDFTISDNSRFIAYGFPLKHGETDGYVMQAIHVYDMEGRKIFAATTENSHDYAPAFDADSKNLYYLSYRSLDPSPDRVVLNFSFEVVSKPFVIPLIPGSPNPTKLVPRSMTSEAGEYDLNDMYKRSSPINVDPGDYRMIIPLESSILIYSVPVHGEFAAYYQGAPEKGVLLKYDVKTRKVTEVKNNLTDLRLSADRKTVMVRKDDGKIYTFPLEKPEDERTVETDKRPLVSSIHEEFLQMYDEAWKLARDNYWNEAVAKEISERIYEKYRNLVPLCKTRYDLSNVIVEMQGEYRTSHSYEMGGTFTDKDPFRSGRIACDFKLDGDHYVVAKAYAGDYSNEGEKSPIFEYGIDPTGYLIEDIDGETVGAGSNIYRVLSEKAGTSARIRLSGKGGDKRDLMIDILDDDRFIRYRSWVEANRRYVHERSKGTIGYIHIPDMGMMGLNEFYRLFINESSYQGLIVDVRFNGGGFVSQLIIEKLMNKRIGYDNPRRGTLSPYPTNSVRGKIIAITNEYAGSDGDIFSFSFKKLGLGKLIGTRTWGGVVGITPKRRLIDGTVLTQPEFAFWFRDAGFGVENYGVDPDVEIEYAPHDYLSGKDPQIDYAIDALIEELRNWNEELPQRPS</sequence>
<keyword id="KW-0002">3D-structure</keyword>
<keyword id="KW-0963">Cytoplasm</keyword>
<keyword id="KW-0903">Direct protein sequencing</keyword>
<keyword id="KW-0378">Hydrolase</keyword>
<keyword id="KW-0645">Protease</keyword>
<keyword id="KW-1185">Reference proteome</keyword>
<keyword id="KW-0720">Serine protease</keyword>
<name>TRI_THEAC</name>
<dbReference type="EC" id="3.4.21.-" evidence="4"/>
<dbReference type="EMBL" id="U72850">
    <property type="protein sequence ID" value="AAC44621.1"/>
    <property type="molecule type" value="Genomic_DNA"/>
</dbReference>
<dbReference type="EMBL" id="AL445067">
    <property type="protein sequence ID" value="CAC12608.1"/>
    <property type="molecule type" value="Genomic_DNA"/>
</dbReference>
<dbReference type="PIR" id="T43255">
    <property type="entry name" value="T43255"/>
</dbReference>
<dbReference type="RefSeq" id="WP_010901890.1">
    <property type="nucleotide sequence ID" value="NC_002578.1"/>
</dbReference>
<dbReference type="PDB" id="1K32">
    <property type="method" value="X-ray"/>
    <property type="resolution" value="2.00 A"/>
    <property type="chains" value="A/B/C/D/E/F=27-1071"/>
</dbReference>
<dbReference type="PDB" id="1N6D">
    <property type="method" value="X-ray"/>
    <property type="resolution" value="2.80 A"/>
    <property type="chains" value="A/B/C/D/E/F=1-1071"/>
</dbReference>
<dbReference type="PDB" id="1N6E">
    <property type="method" value="X-ray"/>
    <property type="resolution" value="2.60 A"/>
    <property type="chains" value="A/C/E/G/I/K=1-1071"/>
</dbReference>
<dbReference type="PDB" id="1N6F">
    <property type="method" value="X-ray"/>
    <property type="resolution" value="2.70 A"/>
    <property type="chains" value="A/B/C/D/E/F=1-1071"/>
</dbReference>
<dbReference type="PDBsum" id="1K32"/>
<dbReference type="PDBsum" id="1N6D"/>
<dbReference type="PDBsum" id="1N6E"/>
<dbReference type="PDBsum" id="1N6F"/>
<dbReference type="SASBDB" id="P96086"/>
<dbReference type="SMR" id="P96086"/>
<dbReference type="STRING" id="273075.gene:9572721"/>
<dbReference type="MEROPS" id="S41.005"/>
<dbReference type="PaxDb" id="273075-Ta1490"/>
<dbReference type="EnsemblBacteria" id="CAC12608">
    <property type="protein sequence ID" value="CAC12608"/>
    <property type="gene ID" value="CAC12608"/>
</dbReference>
<dbReference type="KEGG" id="tac:Ta1490"/>
<dbReference type="eggNOG" id="arCOG03384">
    <property type="taxonomic scope" value="Archaea"/>
</dbReference>
<dbReference type="HOGENOM" id="CLU_005503_1_0_2"/>
<dbReference type="InParanoid" id="P96086"/>
<dbReference type="OrthoDB" id="25019at2157"/>
<dbReference type="BRENDA" id="3.4.21.B34">
    <property type="organism ID" value="6324"/>
</dbReference>
<dbReference type="EvolutionaryTrace" id="P96086"/>
<dbReference type="Proteomes" id="UP000001024">
    <property type="component" value="Chromosome"/>
</dbReference>
<dbReference type="GO" id="GO:0005737">
    <property type="term" value="C:cytoplasm"/>
    <property type="evidence" value="ECO:0007669"/>
    <property type="project" value="UniProtKB-SubCell"/>
</dbReference>
<dbReference type="GO" id="GO:0008236">
    <property type="term" value="F:serine-type peptidase activity"/>
    <property type="evidence" value="ECO:0000314"/>
    <property type="project" value="UniProtKB"/>
</dbReference>
<dbReference type="GO" id="GO:0006508">
    <property type="term" value="P:proteolysis"/>
    <property type="evidence" value="ECO:0000314"/>
    <property type="project" value="UniProtKB"/>
</dbReference>
<dbReference type="CDD" id="cd10828">
    <property type="entry name" value="cpPDZ_Tricorn-protease"/>
    <property type="match status" value="1"/>
</dbReference>
<dbReference type="CDD" id="cd07562">
    <property type="entry name" value="Peptidase_S41_TRI"/>
    <property type="match status" value="1"/>
</dbReference>
<dbReference type="FunFam" id="2.130.10.10:FF:001823">
    <property type="entry name" value="Tricorn protease"/>
    <property type="match status" value="1"/>
</dbReference>
<dbReference type="FunFam" id="2.120.10.60:FF:000001">
    <property type="entry name" value="Tricorn protease homolog"/>
    <property type="match status" value="1"/>
</dbReference>
<dbReference type="FunFam" id="2.30.42.10:FF:000221">
    <property type="entry name" value="Tricorn protease homolog"/>
    <property type="match status" value="1"/>
</dbReference>
<dbReference type="FunFam" id="3.30.750.44:FF:000011">
    <property type="entry name" value="Tricorn protease homolog"/>
    <property type="match status" value="1"/>
</dbReference>
<dbReference type="FunFam" id="3.90.226.10:FF:000053">
    <property type="entry name" value="Tricorn protease homolog"/>
    <property type="match status" value="1"/>
</dbReference>
<dbReference type="Gene3D" id="2.30.42.10">
    <property type="match status" value="1"/>
</dbReference>
<dbReference type="Gene3D" id="3.30.750.44">
    <property type="match status" value="1"/>
</dbReference>
<dbReference type="Gene3D" id="3.90.226.10">
    <property type="entry name" value="2-enoyl-CoA Hydratase, Chain A, domain 1"/>
    <property type="match status" value="1"/>
</dbReference>
<dbReference type="Gene3D" id="2.120.10.60">
    <property type="entry name" value="Tricorn protease N-terminal domain"/>
    <property type="match status" value="1"/>
</dbReference>
<dbReference type="Gene3D" id="2.130.10.10">
    <property type="entry name" value="YVTN repeat-like/Quinoprotein amine dehydrogenase"/>
    <property type="match status" value="1"/>
</dbReference>
<dbReference type="InterPro" id="IPR029045">
    <property type="entry name" value="ClpP/crotonase-like_dom_sf"/>
</dbReference>
<dbReference type="InterPro" id="IPR011659">
    <property type="entry name" value="PD40"/>
</dbReference>
<dbReference type="InterPro" id="IPR036034">
    <property type="entry name" value="PDZ_sf"/>
</dbReference>
<dbReference type="InterPro" id="IPR005151">
    <property type="entry name" value="Tail-specific_protease"/>
</dbReference>
<dbReference type="InterPro" id="IPR028204">
    <property type="entry name" value="Tricorn_C1"/>
</dbReference>
<dbReference type="InterPro" id="IPR029414">
    <property type="entry name" value="Tricorn_PDZ"/>
</dbReference>
<dbReference type="InterPro" id="IPR012393">
    <property type="entry name" value="Tricorn_protease"/>
</dbReference>
<dbReference type="InterPro" id="IPR015943">
    <property type="entry name" value="WD40/YVTN_repeat-like_dom_sf"/>
</dbReference>
<dbReference type="PANTHER" id="PTHR43253">
    <property type="entry name" value="TRICORN PROTEASE HOMOLOG 2-RELATED"/>
    <property type="match status" value="1"/>
</dbReference>
<dbReference type="PANTHER" id="PTHR43253:SF1">
    <property type="entry name" value="TRICORN PROTEASE HOMOLOG 2-RELATED"/>
    <property type="match status" value="1"/>
</dbReference>
<dbReference type="Pfam" id="PF07676">
    <property type="entry name" value="PD40"/>
    <property type="match status" value="1"/>
</dbReference>
<dbReference type="Pfam" id="PF14685">
    <property type="entry name" value="PDZ_Tricorn"/>
    <property type="match status" value="1"/>
</dbReference>
<dbReference type="Pfam" id="PF03572">
    <property type="entry name" value="Peptidase_S41"/>
    <property type="match status" value="1"/>
</dbReference>
<dbReference type="Pfam" id="PF14684">
    <property type="entry name" value="Tricorn_C1"/>
    <property type="match status" value="1"/>
</dbReference>
<dbReference type="PIRSF" id="PIRSF036421">
    <property type="entry name" value="Tricorn_protease"/>
    <property type="match status" value="1"/>
</dbReference>
<dbReference type="SMART" id="SM00245">
    <property type="entry name" value="TSPc"/>
    <property type="match status" value="1"/>
</dbReference>
<dbReference type="SUPFAM" id="SSF52096">
    <property type="entry name" value="ClpP/crotonase"/>
    <property type="match status" value="1"/>
</dbReference>
<dbReference type="SUPFAM" id="SSF50156">
    <property type="entry name" value="PDZ domain-like"/>
    <property type="match status" value="1"/>
</dbReference>
<dbReference type="SUPFAM" id="SSF69322">
    <property type="entry name" value="Tricorn protease domain 2"/>
    <property type="match status" value="1"/>
</dbReference>
<dbReference type="SUPFAM" id="SSF69304">
    <property type="entry name" value="Tricorn protease N-terminal domain"/>
    <property type="match status" value="1"/>
</dbReference>
<evidence type="ECO:0000269" key="1">
    <source>
    </source>
</evidence>
<evidence type="ECO:0000269" key="2">
    <source>
    </source>
</evidence>
<evidence type="ECO:0000269" key="3">
    <source>
    </source>
</evidence>
<evidence type="ECO:0000269" key="4">
    <source>
    </source>
</evidence>
<evidence type="ECO:0000269" key="5">
    <source>
    </source>
</evidence>
<evidence type="ECO:0000305" key="6"/>
<evidence type="ECO:0007829" key="7">
    <source>
        <dbReference type="PDB" id="1K32"/>
    </source>
</evidence>
<evidence type="ECO:0007829" key="8">
    <source>
        <dbReference type="PDB" id="1N6D"/>
    </source>
</evidence>
<evidence type="ECO:0007829" key="9">
    <source>
        <dbReference type="PDB" id="1N6E"/>
    </source>
</evidence>
<evidence type="ECO:0007829" key="10">
    <source>
        <dbReference type="PDB" id="1N6F"/>
    </source>
</evidence>
<feature type="chain" id="PRO_0000207197" description="Tricorn protease">
    <location>
        <begin position="1"/>
        <end position="1071"/>
    </location>
</feature>
<feature type="region of interest" description="Six-bladed beta propeller" evidence="4">
    <location>
        <begin position="39"/>
        <end position="310"/>
    </location>
</feature>
<feature type="region of interest" description="Binds the substrate's C-terminus" evidence="3 4">
    <location>
        <begin position="131"/>
        <end position="132"/>
    </location>
</feature>
<feature type="region of interest" description="Seven-bladed beta propeller" evidence="4">
    <location>
        <begin position="326"/>
        <end position="675"/>
    </location>
</feature>
<feature type="region of interest" description="C-1; helical bundle" evidence="4">
    <location>
        <begin position="679"/>
        <end position="745"/>
    </location>
</feature>
<feature type="region of interest" description="PDZ-like" evidence="4">
    <location>
        <begin position="761"/>
        <end position="855"/>
    </location>
</feature>
<feature type="region of interest" description="C-2; alpha-beta sandwich" evidence="4">
    <location>
        <begin position="856"/>
        <end position="1061"/>
    </location>
</feature>
<feature type="active site" description="Charge relay system" evidence="3 4">
    <location>
        <position position="746"/>
    </location>
</feature>
<feature type="active site" description="Nucleophile" evidence="3 4">
    <location>
        <position position="965"/>
    </location>
</feature>
<feature type="active site" description="Charge relay system" evidence="3">
    <location>
        <position position="1023"/>
    </location>
</feature>
<feature type="binding site" evidence="3 4">
    <location>
        <begin position="916"/>
        <end position="918"/>
    </location>
    <ligand>
        <name>substrate</name>
    </ligand>
</feature>
<feature type="binding site" evidence="4">
    <location>
        <begin position="993"/>
        <end position="995"/>
    </location>
    <ligand>
        <name>substrate</name>
    </ligand>
</feature>
<feature type="site" description="Substrate specificity switch" evidence="3">
    <location>
        <position position="936"/>
    </location>
</feature>
<feature type="site" description="Transition state stabilizer; via amide nitrogen" evidence="3 4">
    <location>
        <position position="966"/>
    </location>
</feature>
<feature type="mutagenesis site" description="Decreased catalytic activity towards protein substrates. Retains 10% of wild-type activity towards casein and about 30% towards oxidized insulin beta chain. However, there is no change in the activity for a tripeptide substrate." evidence="3 4">
    <original>RR</original>
    <variation>EE</variation>
    <location>
        <begin position="131"/>
        <end position="132"/>
    </location>
</feature>
<feature type="mutagenesis site" description="Both peptidolytic and proteolytic activities doubled, probably due to the increase of the diameter of the channel for product exit. Retains less than 50% of wild-type activity after modification of the thiol group by maleimide, which decreases the diameter of the exit channel and impairs product exit from the catalytic chamber." evidence="3 4">
    <original>L</original>
    <variation>C</variation>
    <location>
        <position position="184"/>
    </location>
</feature>
<feature type="mutagenesis site" description="Retains 50% of wild-type activity after modification of the thiol group by maleimide, which decreases the diameter of the access channel and impairs substrate access to the active site. Decreased catalytic activity towards fluorogenic substrate and insulin beta chain prior to any modification or oxidation, probably due to the decrease of the diameter of the substrate access channel. Further decreased catalytic activity towards these substrates after modification with fluorescein-5-maleimide or oxidation by oxidized glutathione; when associated with C-643." evidence="3 4">
    <original>R</original>
    <variation>C</variation>
    <location>
        <position position="414"/>
    </location>
</feature>
<feature type="mutagenesis site" description="Decreased catalytic activity towards fluorogenic substrate and insulin beta chain prior to any modification or oxidation. Further decreased catalytic activity towards these substrates after modification with fluorescein-5-maleimide or oxidation by oxidized glutathione; when associated with C-414." evidence="4">
    <original>A</original>
    <variation>C</variation>
    <location>
        <position position="643"/>
    </location>
</feature>
<feature type="mutagenesis site" description="Loss of catalytic activity." evidence="3">
    <original>H</original>
    <variation>A</variation>
    <location>
        <position position="746"/>
    </location>
</feature>
<feature type="mutagenesis site" description="Loss of catalytic activity." evidence="3">
    <original>S</original>
    <variation>A</variation>
    <location>
        <position position="965"/>
    </location>
</feature>
<feature type="strand" evidence="7">
    <location>
        <begin position="44"/>
        <end position="49"/>
    </location>
</feature>
<feature type="strand" evidence="7">
    <location>
        <begin position="52"/>
        <end position="57"/>
    </location>
</feature>
<feature type="strand" evidence="7">
    <location>
        <begin position="60"/>
        <end position="65"/>
    </location>
</feature>
<feature type="turn" evidence="7">
    <location>
        <begin position="66"/>
        <end position="68"/>
    </location>
</feature>
<feature type="strand" evidence="7">
    <location>
        <begin position="71"/>
        <end position="75"/>
    </location>
</feature>
<feature type="strand" evidence="7">
    <location>
        <begin position="77"/>
        <end position="86"/>
    </location>
</feature>
<feature type="strand" evidence="7">
    <location>
        <begin position="90"/>
        <end position="100"/>
    </location>
</feature>
<feature type="strand" evidence="7">
    <location>
        <begin position="105"/>
        <end position="112"/>
    </location>
</feature>
<feature type="turn" evidence="7">
    <location>
        <begin position="113"/>
        <end position="116"/>
    </location>
</feature>
<feature type="strand" evidence="7">
    <location>
        <begin position="117"/>
        <end position="120"/>
    </location>
</feature>
<feature type="strand" evidence="7">
    <location>
        <begin position="126"/>
        <end position="129"/>
    </location>
</feature>
<feature type="strand" evidence="7">
    <location>
        <begin position="135"/>
        <end position="140"/>
    </location>
</feature>
<feature type="strand" evidence="7">
    <location>
        <begin position="146"/>
        <end position="150"/>
    </location>
</feature>
<feature type="strand" evidence="7">
    <location>
        <begin position="154"/>
        <end position="156"/>
    </location>
</feature>
<feature type="strand" evidence="7">
    <location>
        <begin position="161"/>
        <end position="166"/>
    </location>
</feature>
<feature type="turn" evidence="7">
    <location>
        <begin position="167"/>
        <end position="170"/>
    </location>
</feature>
<feature type="strand" evidence="7">
    <location>
        <begin position="171"/>
        <end position="174"/>
    </location>
</feature>
<feature type="strand" evidence="7">
    <location>
        <begin position="181"/>
        <end position="186"/>
    </location>
</feature>
<feature type="strand" evidence="7">
    <location>
        <begin position="189"/>
        <end position="195"/>
    </location>
</feature>
<feature type="strand" evidence="7">
    <location>
        <begin position="212"/>
        <end position="218"/>
    </location>
</feature>
<feature type="strand" evidence="7">
    <location>
        <begin position="221"/>
        <end position="226"/>
    </location>
</feature>
<feature type="strand" evidence="7">
    <location>
        <begin position="233"/>
        <end position="238"/>
    </location>
</feature>
<feature type="strand" evidence="7">
    <location>
        <begin position="241"/>
        <end position="246"/>
    </location>
</feature>
<feature type="strand" evidence="7">
    <location>
        <begin position="253"/>
        <end position="258"/>
    </location>
</feature>
<feature type="strand" evidence="7">
    <location>
        <begin position="275"/>
        <end position="283"/>
    </location>
</feature>
<feature type="strand" evidence="7">
    <location>
        <begin position="285"/>
        <end position="289"/>
    </location>
</feature>
<feature type="strand" evidence="7">
    <location>
        <begin position="292"/>
        <end position="296"/>
    </location>
</feature>
<feature type="turn" evidence="7">
    <location>
        <begin position="298"/>
        <end position="300"/>
    </location>
</feature>
<feature type="strand" evidence="7">
    <location>
        <begin position="303"/>
        <end position="305"/>
    </location>
</feature>
<feature type="strand" evidence="7">
    <location>
        <begin position="316"/>
        <end position="320"/>
    </location>
</feature>
<feature type="helix" evidence="7">
    <location>
        <begin position="322"/>
        <end position="325"/>
    </location>
</feature>
<feature type="strand" evidence="7">
    <location>
        <begin position="326"/>
        <end position="331"/>
    </location>
</feature>
<feature type="helix" evidence="7">
    <location>
        <begin position="333"/>
        <end position="335"/>
    </location>
</feature>
<feature type="strand" evidence="7">
    <location>
        <begin position="337"/>
        <end position="341"/>
    </location>
</feature>
<feature type="strand" evidence="7">
    <location>
        <begin position="344"/>
        <end position="348"/>
    </location>
</feature>
<feature type="strand" evidence="7">
    <location>
        <begin position="352"/>
        <end position="357"/>
    </location>
</feature>
<feature type="strand" evidence="7">
    <location>
        <begin position="364"/>
        <end position="369"/>
    </location>
</feature>
<feature type="strand" evidence="7">
    <location>
        <begin position="371"/>
        <end position="381"/>
    </location>
</feature>
<feature type="strand" evidence="7">
    <location>
        <begin position="384"/>
        <end position="391"/>
    </location>
</feature>
<feature type="turn" evidence="7">
    <location>
        <begin position="392"/>
        <end position="394"/>
    </location>
</feature>
<feature type="strand" evidence="7">
    <location>
        <begin position="397"/>
        <end position="399"/>
    </location>
</feature>
<feature type="strand" evidence="7">
    <location>
        <begin position="406"/>
        <end position="412"/>
    </location>
</feature>
<feature type="strand" evidence="7">
    <location>
        <begin position="416"/>
        <end position="423"/>
    </location>
</feature>
<feature type="strand" evidence="7">
    <location>
        <begin position="426"/>
        <end position="432"/>
    </location>
</feature>
<feature type="turn" evidence="7">
    <location>
        <begin position="433"/>
        <end position="435"/>
    </location>
</feature>
<feature type="strand" evidence="7">
    <location>
        <begin position="438"/>
        <end position="443"/>
    </location>
</feature>
<feature type="strand" evidence="7">
    <location>
        <begin position="445"/>
        <end position="447"/>
    </location>
</feature>
<feature type="strand" evidence="7">
    <location>
        <begin position="452"/>
        <end position="454"/>
    </location>
</feature>
<feature type="strand" evidence="7">
    <location>
        <begin position="460"/>
        <end position="467"/>
    </location>
</feature>
<feature type="strand" evidence="7">
    <location>
        <begin position="477"/>
        <end position="484"/>
    </location>
</feature>
<feature type="turn" evidence="7">
    <location>
        <begin position="485"/>
        <end position="488"/>
    </location>
</feature>
<feature type="strand" evidence="7">
    <location>
        <begin position="489"/>
        <end position="492"/>
    </location>
</feature>
<feature type="strand" evidence="7">
    <location>
        <begin position="496"/>
        <end position="505"/>
    </location>
</feature>
<feature type="strand" evidence="7">
    <location>
        <begin position="511"/>
        <end position="517"/>
    </location>
</feature>
<feature type="strand" evidence="7">
    <location>
        <begin position="526"/>
        <end position="529"/>
    </location>
</feature>
<feature type="strand" evidence="7">
    <location>
        <begin position="537"/>
        <end position="545"/>
    </location>
</feature>
<feature type="helix" evidence="7">
    <location>
        <begin position="551"/>
        <end position="553"/>
    </location>
</feature>
<feature type="helix" evidence="7">
    <location>
        <begin position="557"/>
        <end position="559"/>
    </location>
</feature>
<feature type="helix" evidence="7">
    <location>
        <begin position="571"/>
        <end position="574"/>
    </location>
</feature>
<feature type="strand" evidence="7">
    <location>
        <begin position="585"/>
        <end position="590"/>
    </location>
</feature>
<feature type="strand" evidence="7">
    <location>
        <begin position="592"/>
        <end position="599"/>
    </location>
</feature>
<feature type="helix" evidence="7">
    <location>
        <begin position="606"/>
        <end position="611"/>
    </location>
</feature>
<feature type="strand" evidence="7">
    <location>
        <begin position="617"/>
        <end position="623"/>
    </location>
</feature>
<feature type="turn" evidence="7">
    <location>
        <begin position="624"/>
        <end position="626"/>
    </location>
</feature>
<feature type="strand" evidence="7">
    <location>
        <begin position="629"/>
        <end position="641"/>
    </location>
</feature>
<feature type="strand" evidence="8">
    <location>
        <begin position="643"/>
        <end position="645"/>
    </location>
</feature>
<feature type="strand" evidence="7">
    <location>
        <begin position="647"/>
        <end position="652"/>
    </location>
</feature>
<feature type="strand" evidence="7">
    <location>
        <begin position="657"/>
        <end position="663"/>
    </location>
</feature>
<feature type="strand" evidence="7">
    <location>
        <begin position="678"/>
        <end position="681"/>
    </location>
</feature>
<feature type="helix" evidence="7">
    <location>
        <begin position="682"/>
        <end position="700"/>
    </location>
</feature>
<feature type="helix" evidence="7">
    <location>
        <begin position="704"/>
        <end position="719"/>
    </location>
</feature>
<feature type="helix" evidence="7">
    <location>
        <begin position="720"/>
        <end position="724"/>
    </location>
</feature>
<feature type="helix" evidence="7">
    <location>
        <begin position="728"/>
        <end position="740"/>
    </location>
</feature>
<feature type="strand" evidence="7">
    <location>
        <begin position="766"/>
        <end position="772"/>
    </location>
</feature>
<feature type="strand" evidence="7">
    <location>
        <begin position="775"/>
        <end position="781"/>
    </location>
</feature>
<feature type="strand" evidence="10">
    <location>
        <begin position="788"/>
        <end position="790"/>
    </location>
</feature>
<feature type="helix" evidence="7">
    <location>
        <begin position="794"/>
        <end position="798"/>
    </location>
</feature>
<feature type="strand" evidence="7">
    <location>
        <begin position="806"/>
        <end position="810"/>
    </location>
</feature>
<feature type="strand" evidence="10">
    <location>
        <begin position="816"/>
        <end position="819"/>
    </location>
</feature>
<feature type="helix" evidence="7">
    <location>
        <begin position="821"/>
        <end position="826"/>
    </location>
</feature>
<feature type="turn" evidence="7">
    <location>
        <begin position="827"/>
        <end position="830"/>
    </location>
</feature>
<feature type="strand" evidence="7">
    <location>
        <begin position="831"/>
        <end position="838"/>
    </location>
</feature>
<feature type="strand" evidence="7">
    <location>
        <begin position="840"/>
        <end position="842"/>
    </location>
</feature>
<feature type="strand" evidence="7">
    <location>
        <begin position="844"/>
        <end position="850"/>
    </location>
</feature>
<feature type="helix" evidence="7">
    <location>
        <begin position="856"/>
        <end position="874"/>
    </location>
</feature>
<feature type="turn" evidence="7">
    <location>
        <begin position="875"/>
        <end position="877"/>
    </location>
</feature>
<feature type="strand" evidence="7">
    <location>
        <begin position="878"/>
        <end position="883"/>
    </location>
</feature>
<feature type="helix" evidence="7">
    <location>
        <begin position="889"/>
        <end position="902"/>
    </location>
</feature>
<feature type="strand" evidence="7">
    <location>
        <begin position="905"/>
        <end position="911"/>
    </location>
</feature>
<feature type="helix" evidence="7">
    <location>
        <begin position="921"/>
        <end position="928"/>
    </location>
</feature>
<feature type="strand" evidence="7">
    <location>
        <begin position="934"/>
        <end position="941"/>
    </location>
</feature>
<feature type="strand" evidence="7">
    <location>
        <begin position="944"/>
        <end position="947"/>
    </location>
</feature>
<feature type="strand" evidence="7">
    <location>
        <begin position="953"/>
        <end position="959"/>
    </location>
</feature>
<feature type="helix" evidence="7">
    <location>
        <begin position="966"/>
        <end position="976"/>
    </location>
</feature>
<feature type="strand" evidence="7">
    <location>
        <begin position="979"/>
        <end position="985"/>
    </location>
</feature>
<feature type="strand" evidence="9">
    <location>
        <begin position="992"/>
        <end position="994"/>
    </location>
</feature>
<feature type="strand" evidence="7">
    <location>
        <begin position="1011"/>
        <end position="1015"/>
    </location>
</feature>
<feature type="turn" evidence="7">
    <location>
        <begin position="1016"/>
        <end position="1018"/>
    </location>
</feature>
<feature type="turn" evidence="7">
    <location>
        <begin position="1020"/>
        <end position="1025"/>
    </location>
</feature>
<feature type="strand" evidence="7">
    <location>
        <begin position="1030"/>
        <end position="1032"/>
    </location>
</feature>
<feature type="helix" evidence="7">
    <location>
        <begin position="1037"/>
        <end position="1041"/>
    </location>
</feature>
<feature type="helix" evidence="7">
    <location>
        <begin position="1046"/>
        <end position="1058"/>
    </location>
</feature>
<organism>
    <name type="scientific">Thermoplasma acidophilum (strain ATCC 25905 / DSM 1728 / JCM 9062 / NBRC 15155 / AMRC-C165)</name>
    <dbReference type="NCBI Taxonomy" id="273075"/>
    <lineage>
        <taxon>Archaea</taxon>
        <taxon>Methanobacteriati</taxon>
        <taxon>Thermoplasmatota</taxon>
        <taxon>Thermoplasmata</taxon>
        <taxon>Thermoplasmatales</taxon>
        <taxon>Thermoplasmataceae</taxon>
        <taxon>Thermoplasma</taxon>
    </lineage>
</organism>
<gene>
    <name type="primary">tri</name>
    <name type="ordered locus">Ta1490</name>
</gene>
<reference key="1">
    <citation type="journal article" date="1996" name="Science">
        <title>Tricorn protease -- the core of a modular proteolytic system.</title>
        <authorList>
            <person name="Tamura T."/>
            <person name="Tamura N."/>
            <person name="Cejka Z."/>
            <person name="Hegerl R."/>
            <person name="Lottspeich F."/>
            <person name="Baumeister W."/>
        </authorList>
    </citation>
    <scope>NUCLEOTIDE SEQUENCE [GENOMIC DNA]</scope>
    <scope>PROTEIN SEQUENCE OF 120-126; 290-304; 376-392; 490-506; 554-560; 634-638; 676-684; 696-708; 709-716 AND 932-946</scope>
    <source>
        <strain>ATCC 25905 / DSM 1728 / JCM 9062 / NBRC 15155 / AMRC-C165</strain>
    </source>
</reference>
<reference key="2">
    <citation type="journal article" date="2000" name="Nature">
        <title>The genome sequence of the thermoacidophilic scavenger Thermoplasma acidophilum.</title>
        <authorList>
            <person name="Ruepp A."/>
            <person name="Graml W."/>
            <person name="Santos-Martinez M.-L."/>
            <person name="Koretke K.K."/>
            <person name="Volker C."/>
            <person name="Mewes H.-W."/>
            <person name="Frishman D."/>
            <person name="Stocker S."/>
            <person name="Lupas A.N."/>
            <person name="Baumeister W."/>
        </authorList>
    </citation>
    <scope>NUCLEOTIDE SEQUENCE [LARGE SCALE GENOMIC DNA]</scope>
    <source>
        <strain>ATCC 25905 / DSM 1728 / JCM 9062 / NBRC 15155 / AMRC-C165</strain>
    </source>
</reference>
<reference key="3">
    <citation type="journal article" date="1998" name="Cell">
        <title>The role of tricorn protease and its aminopeptidase-interacting factors in cellular protein degradation.</title>
        <authorList>
            <person name="Tamura N."/>
            <person name="Lottspeich F."/>
            <person name="Baumeister W."/>
            <person name="Tamura T."/>
        </authorList>
    </citation>
    <scope>CHARACTERIZATION OF PROTEIN INTERACTION</scope>
    <source>
        <strain>ATCC 25905 / DSM 1728 / JCM 9062 / NBRC 15155 / AMRC-C165</strain>
    </source>
</reference>
<reference key="4">
    <citation type="journal article" date="1997" name="Mol. Cell">
        <title>Tricorn protease exists as an icosahedral supermolecule in vivo.</title>
        <authorList>
            <person name="Walz J."/>
            <person name="Tamura T."/>
            <person name="Tamura N."/>
            <person name="Grimm R."/>
            <person name="Baumeister W."/>
            <person name="Koster A.J."/>
        </authorList>
    </citation>
    <scope>THREE-DIMENSIONAL RECONSTRUCTION FROM ELECTRON MICROGRAPHS</scope>
    <source>
        <strain>ATCC 25905 / DSM 1728 / JCM 9062 / NBRC 15155 / AMRC-C165</strain>
    </source>
</reference>
<reference key="5">
    <citation type="journal article" date="1999" name="J. Struct. Biol.">
        <title>Capsids of Tricorn protease studied by electron cryomicroscopy.</title>
        <authorList>
            <person name="Walz J."/>
            <person name="Koster A.J."/>
            <person name="Tamura T."/>
            <person name="Baumeister W."/>
        </authorList>
    </citation>
    <scope>STRUCTURE BY ELECTRON MICROSCOPY</scope>
</reference>
<reference key="6">
    <citation type="journal article" date="1999" name="FEMS Microbiol. Lett.">
        <title>Beta-propeller repeats and a PDZ domain in the Tricorn protease: predicted self-compartmentalisation and C-terminal polypeptide-binding strategies of substrate selection.</title>
        <authorList>
            <person name="Ponting C.P."/>
            <person name="Pallen M.J."/>
        </authorList>
    </citation>
    <scope>DOMAINS</scope>
</reference>
<reference key="7">
    <citation type="journal article" date="2001" name="J. Struct. Biol.">
        <title>Purification, crystallization, and preliminary X-ray diffraction analysis of the Tricorn protease hexamer from Thermoplasma acidophilum.</title>
        <authorList>
            <person name="Bosch J."/>
            <person name="Tamura T."/>
            <person name="Bourenkov G."/>
            <person name="Baumeister W."/>
            <person name="Essen L.-O."/>
        </authorList>
    </citation>
    <scope>CRYSTALLIZATION</scope>
</reference>
<reference key="8">
    <citation type="journal article" date="2001" name="Nature">
        <title>Crystal structure of the tricorn protease reveals a protein disassembly line.</title>
        <authorList>
            <person name="Brandstetter H."/>
            <person name="Kim J.-S."/>
            <person name="Groll M."/>
            <person name="Huber R."/>
        </authorList>
    </citation>
    <scope>X-RAY CRYSTALLOGRAPHY (2.0 ANGSTROMS) OF 27-1071</scope>
    <scope>SUBUNIT</scope>
    <scope>DOMAIN</scope>
    <scope>REGIONS</scope>
    <scope>ACTIVE SITES</scope>
    <scope>SITES</scope>
    <scope>MUTAGENESIS OF 131-ARG-ARG-132; LEU-184; ARG-414; HIS-746 AND SER-965</scope>
</reference>
<reference key="9">
    <citation type="journal article" date="2002" name="J. Mol. Biol.">
        <title>Navigation inside a protease: substrate selection and product exit in the tricorn protease from Thermoplasma acidophilum.</title>
        <authorList>
            <person name="Kim J.-S."/>
            <person name="Groll M."/>
            <person name="Musiol H.-J."/>
            <person name="Behrendt R."/>
            <person name="Kaiser M."/>
            <person name="Moroder L."/>
            <person name="Huber R."/>
            <person name="Brandstetter H."/>
        </authorList>
    </citation>
    <scope>X-RAY CRYSTALLOGRAPHY (2.6 ANGSTROMS) IN COMPLEXES WITH INHIBITORS</scope>
    <scope>CATALYTIC ACTIVITY</scope>
    <scope>SUBUNIT</scope>
    <scope>DOMAIN</scope>
    <scope>REGIONS</scope>
    <scope>ACTIVE SITES</scope>
    <scope>SITES</scope>
    <scope>MUTAGENESIS OF 131-ARG-ARG-132; LEU-184; ARG-414 AND ALA-643</scope>
</reference>
<comment type="function">
    <text>Tricorn degrades oligopeptides (probably derived from the proteasome) and channels the products to F1, F2 and F3 proteases, which then catalyze the terminal degradation step, yielding free amino acids.</text>
</comment>
<comment type="biophysicochemical properties">
    <phDependence>
        <text>Optimum pH is 8.5-8.8.</text>
    </phDependence>
    <temperatureDependence>
        <text>Optimum temperature is 65 degrees Celsius.</text>
    </temperatureDependence>
</comment>
<comment type="subunit">
    <text evidence="2 3 4 5">Part of the Tricorn proteolytic complex. Assembles to form a hexameric toroid, 20 copies of which may then assemble to form an icosahedral supermolecule of 14.6 MDa.</text>
</comment>
<comment type="subcellular location">
    <subcellularLocation>
        <location>Cytoplasm</location>
    </subcellularLocation>
</comment>
<comment type="domain">
    <text evidence="1 3 4">It is thought that substrate reaches the active site through the seven-bladed beta propeller channel, while products exit via the six-bladed beta propeller channel.</text>
</comment>
<comment type="similarity">
    <text evidence="6">Belongs to the peptidase S41B family.</text>
</comment>
<proteinExistence type="evidence at protein level"/>